<evidence type="ECO:0000255" key="1">
    <source>
        <dbReference type="HAMAP-Rule" id="MF_04004"/>
    </source>
</evidence>
<evidence type="ECO:0000256" key="2">
    <source>
        <dbReference type="SAM" id="MobiDB-lite"/>
    </source>
</evidence>
<evidence type="ECO:0000305" key="3"/>
<evidence type="ECO:0007829" key="4">
    <source>
        <dbReference type="PDB" id="2EWL"/>
    </source>
</evidence>
<feature type="chain" id="PRO_0000133442" description="Protein E7">
    <location>
        <begin position="1"/>
        <end position="106"/>
    </location>
</feature>
<feature type="zinc finger region" evidence="1">
    <location>
        <begin position="66"/>
        <end position="102"/>
    </location>
</feature>
<feature type="region of interest" description="E7 terminal domain" evidence="1">
    <location>
        <begin position="1"/>
        <end position="50"/>
    </location>
</feature>
<feature type="region of interest" description="Disordered" evidence="2">
    <location>
        <begin position="33"/>
        <end position="55"/>
    </location>
</feature>
<feature type="short sequence motif" description="LXCXE motif; interaction with host RB1 and TMEM173/STING" evidence="1">
    <location>
        <begin position="26"/>
        <end position="30"/>
    </location>
</feature>
<feature type="short sequence motif" description="Nuclear export signal" evidence="1">
    <location>
        <begin position="84"/>
        <end position="92"/>
    </location>
</feature>
<feature type="compositionally biased region" description="Acidic residues" evidence="2">
    <location>
        <begin position="33"/>
        <end position="43"/>
    </location>
</feature>
<feature type="sequence conflict" description="In Ref. 2." evidence="3" ref="2">
    <original>G</original>
    <variation>E</variation>
    <location>
        <position position="3"/>
    </location>
</feature>
<feature type="sequence conflict" description="In Ref. 2." evidence="3" ref="2">
    <original>R</original>
    <variation>Q</variation>
    <location>
        <position position="5"/>
    </location>
</feature>
<feature type="strand" evidence="4">
    <location>
        <begin position="57"/>
        <end position="66"/>
    </location>
</feature>
<feature type="turn" evidence="4">
    <location>
        <begin position="67"/>
        <end position="69"/>
    </location>
</feature>
<feature type="strand" evidence="4">
    <location>
        <begin position="72"/>
        <end position="78"/>
    </location>
</feature>
<feature type="helix" evidence="4">
    <location>
        <begin position="81"/>
        <end position="93"/>
    </location>
</feature>
<feature type="helix" evidence="4">
    <location>
        <begin position="100"/>
        <end position="105"/>
    </location>
</feature>
<reference key="1">
    <citation type="journal article" date="1994" name="Curr. Top. Microbiol. Immunol.">
        <title>Primer-directed sequencing of human papillomavirus types.</title>
        <authorList>
            <person name="Delius H."/>
            <person name="Hofmann B."/>
        </authorList>
    </citation>
    <scope>NUCLEOTIDE SEQUENCE [GENOMIC DNA]</scope>
</reference>
<reference key="2">
    <citation type="submission" date="1990-08" db="EMBL/GenBank/DDBJ databases">
        <authorList>
            <person name="Kaplan J.B."/>
            <person name="Burk R.D."/>
        </authorList>
    </citation>
    <scope>NUCLEOTIDE SEQUENCE [GENOMIC DNA]</scope>
</reference>
<reference key="3">
    <citation type="journal article" date="2002" name="Rev. Med. Virol.">
        <title>Interactions of SV40 large T antigen and other viral proteins with retinoblastoma tumour suppressor.</title>
        <authorList>
            <person name="Lee C."/>
            <person name="Cho Y."/>
        </authorList>
    </citation>
    <scope>REVIEW</scope>
</reference>
<proteinExistence type="evidence at protein level"/>
<dbReference type="EMBL" id="X74479">
    <property type="protein sequence ID" value="CAA52574.1"/>
    <property type="molecule type" value="Genomic_DNA"/>
</dbReference>
<dbReference type="EMBL" id="M38198">
    <property type="protein sequence ID" value="AAA46974.1"/>
    <property type="molecule type" value="Genomic_DNA"/>
</dbReference>
<dbReference type="PIR" id="S36562">
    <property type="entry name" value="S36562"/>
</dbReference>
<dbReference type="PDB" id="2EWL">
    <property type="method" value="NMR"/>
    <property type="chains" value="A=55-106"/>
</dbReference>
<dbReference type="PDB" id="2F8B">
    <property type="method" value="NMR"/>
    <property type="chains" value="A/B=55-106"/>
</dbReference>
<dbReference type="PDBsum" id="2EWL"/>
<dbReference type="PDBsum" id="2F8B"/>
<dbReference type="SMR" id="P21736"/>
<dbReference type="EvolutionaryTrace" id="P21736"/>
<dbReference type="Proteomes" id="UP000008695">
    <property type="component" value="Genome"/>
</dbReference>
<dbReference type="GO" id="GO:0030430">
    <property type="term" value="C:host cell cytoplasm"/>
    <property type="evidence" value="ECO:0007669"/>
    <property type="project" value="UniProtKB-SubCell"/>
</dbReference>
<dbReference type="GO" id="GO:0042025">
    <property type="term" value="C:host cell nucleus"/>
    <property type="evidence" value="ECO:0007669"/>
    <property type="project" value="UniProtKB-SubCell"/>
</dbReference>
<dbReference type="GO" id="GO:0003677">
    <property type="term" value="F:DNA binding"/>
    <property type="evidence" value="ECO:0007669"/>
    <property type="project" value="UniProtKB-UniRule"/>
</dbReference>
<dbReference type="GO" id="GO:0003700">
    <property type="term" value="F:DNA-binding transcription factor activity"/>
    <property type="evidence" value="ECO:0007669"/>
    <property type="project" value="UniProtKB-UniRule"/>
</dbReference>
<dbReference type="GO" id="GO:0019904">
    <property type="term" value="F:protein domain specific binding"/>
    <property type="evidence" value="ECO:0007669"/>
    <property type="project" value="UniProtKB-UniRule"/>
</dbReference>
<dbReference type="GO" id="GO:0008270">
    <property type="term" value="F:zinc ion binding"/>
    <property type="evidence" value="ECO:0007669"/>
    <property type="project" value="UniProtKB-KW"/>
</dbReference>
<dbReference type="GO" id="GO:0006351">
    <property type="term" value="P:DNA-templated transcription"/>
    <property type="evidence" value="ECO:0007669"/>
    <property type="project" value="UniProtKB-UniRule"/>
</dbReference>
<dbReference type="GO" id="GO:0039645">
    <property type="term" value="P:symbiont-mediated perturbation of host cell cycle G1/S transition checkpoint"/>
    <property type="evidence" value="ECO:0007669"/>
    <property type="project" value="UniProtKB-UniRule"/>
</dbReference>
<dbReference type="GO" id="GO:0052170">
    <property type="term" value="P:symbiont-mediated suppression of host innate immune response"/>
    <property type="evidence" value="ECO:0007669"/>
    <property type="project" value="UniProtKB-KW"/>
</dbReference>
<dbReference type="GO" id="GO:0039502">
    <property type="term" value="P:symbiont-mediated suppression of host type I interferon-mediated signaling pathway"/>
    <property type="evidence" value="ECO:0007669"/>
    <property type="project" value="UniProtKB-UniRule"/>
</dbReference>
<dbReference type="DisProt" id="DP01780"/>
<dbReference type="Gene3D" id="3.30.160.330">
    <property type="match status" value="1"/>
</dbReference>
<dbReference type="HAMAP" id="MF_04004">
    <property type="entry name" value="PPV_E7"/>
    <property type="match status" value="1"/>
</dbReference>
<dbReference type="InterPro" id="IPR000148">
    <property type="entry name" value="Papilloma_E7"/>
</dbReference>
<dbReference type="Pfam" id="PF00527">
    <property type="entry name" value="E7"/>
    <property type="match status" value="1"/>
</dbReference>
<dbReference type="PIRSF" id="PIRSF003407">
    <property type="entry name" value="Papvi_E7"/>
    <property type="match status" value="1"/>
</dbReference>
<dbReference type="SUPFAM" id="SSF161234">
    <property type="entry name" value="E7 C-terminal domain-like"/>
    <property type="match status" value="1"/>
</dbReference>
<organism>
    <name type="scientific">Human papillomavirus 45</name>
    <dbReference type="NCBI Taxonomy" id="10593"/>
    <lineage>
        <taxon>Viruses</taxon>
        <taxon>Monodnaviria</taxon>
        <taxon>Shotokuvirae</taxon>
        <taxon>Cossaviricota</taxon>
        <taxon>Papovaviricetes</taxon>
        <taxon>Zurhausenvirales</taxon>
        <taxon>Papillomaviridae</taxon>
        <taxon>Firstpapillomavirinae</taxon>
        <taxon>Alphapapillomavirus</taxon>
        <taxon>Alphapapillomavirus 7</taxon>
    </lineage>
</organism>
<organismHost>
    <name type="scientific">Homo sapiens</name>
    <name type="common">Human</name>
    <dbReference type="NCBI Taxonomy" id="9606"/>
</organismHost>
<accession>P21736</accession>
<gene>
    <name evidence="1" type="primary">E7</name>
</gene>
<name>VE7_HPV45</name>
<protein>
    <recommendedName>
        <fullName evidence="1">Protein E7</fullName>
    </recommendedName>
</protein>
<keyword id="KW-0002">3D-structure</keyword>
<keyword id="KW-0010">Activator</keyword>
<keyword id="KW-0238">DNA-binding</keyword>
<keyword id="KW-0244">Early protein</keyword>
<keyword id="KW-1078">G1/S host cell cycle checkpoint dysregulation by virus</keyword>
<keyword id="KW-1035">Host cytoplasm</keyword>
<keyword id="KW-1048">Host nucleus</keyword>
<keyword id="KW-0945">Host-virus interaction</keyword>
<keyword id="KW-1090">Inhibition of host innate immune response by virus</keyword>
<keyword id="KW-1114">Inhibition of host interferon signaling pathway by virus</keyword>
<keyword id="KW-0922">Interferon antiviral system evasion</keyword>
<keyword id="KW-0479">Metal-binding</keyword>
<keyword id="KW-1121">Modulation of host cell cycle by virus</keyword>
<keyword id="KW-0553">Oncogene</keyword>
<keyword id="KW-0804">Transcription</keyword>
<keyword id="KW-0805">Transcription regulation</keyword>
<keyword id="KW-0899">Viral immunoevasion</keyword>
<keyword id="KW-0862">Zinc</keyword>
<keyword id="KW-0863">Zinc-finger</keyword>
<comment type="function">
    <text evidence="1">Plays a role in viral genome replication by driving entry of quiescent cells into the cell cycle. Stimulation of progression from G1 to S phase allows the virus to efficiently use the cellular DNA replicating machinery to achieve viral genome replication. E7 protein has both transforming and trans-activating activities. Induces the disassembly of the E2F1 transcription factor from RB1, with subsequent transcriptional activation of E2F1-regulated S-phase genes. Interferes with host histone deacetylation mediated by HDAC1 and HDAC2, leading to transcription activation. Also plays a role in the inhibition of both antiviral and antiproliferative functions of host interferon alpha. Interaction with host TMEM173/STING impairs the ability of TMEM173/STING to sense cytosolic DNA and promote the production of type I interferon (IFN-alpha and IFN-beta).</text>
</comment>
<comment type="subunit">
    <text evidence="1">Homodimer. Homooligomer. Interacts with host RB1; this interaction induces dissociation of RB1-E2F1 complex thereby disrupting RB1 activity. Interacts with host EP300; this interaction represses EP300 transcriptional activity. Interacts with protein E2; this interaction inhibits E7 oncogenic activity. Interacts with host TMEM173/STING; this interaction impairs the ability of TMEM173/STING to sense cytosolic DNA and promote the production of type I interferon (IFN-alpha and IFN-beta).</text>
</comment>
<comment type="subcellular location">
    <subcellularLocation>
        <location evidence="1">Host cytoplasm</location>
    </subcellularLocation>
    <subcellularLocation>
        <location evidence="1">Host nucleus</location>
    </subcellularLocation>
    <text evidence="1">Predominantly found in the host nucleus.</text>
</comment>
<comment type="domain">
    <text evidence="1">The E7 terminal domain is an intrinsically disordered domain, whose flexibility and conformational transitions confer target adaptability to the oncoprotein. It allows adaptation to a variety of protein targets and exposes the PEST degradation sequence that regulates its turnover in the cell.</text>
</comment>
<comment type="PTM">
    <text evidence="1">Highly phosphorylated.</text>
</comment>
<comment type="similarity">
    <text evidence="1">Belongs to the papillomaviridae E7 protein family.</text>
</comment>
<sequence>MHGPRETLQEIVLHLEPQNELDPVDLLCYEQLSESEEENDEADGVSHAQLPARRAEPQRHKILCVCCKCDGRIELTVESSAEDLRTLQQLFLSTLSFVCPWCATNQ</sequence>